<name>PANCY_PROMP</name>
<organism>
    <name type="scientific">Prochlorococcus marinus subsp. pastoris (strain CCMP1986 / NIES-2087 / MED4)</name>
    <dbReference type="NCBI Taxonomy" id="59919"/>
    <lineage>
        <taxon>Bacteria</taxon>
        <taxon>Bacillati</taxon>
        <taxon>Cyanobacteriota</taxon>
        <taxon>Cyanophyceae</taxon>
        <taxon>Synechococcales</taxon>
        <taxon>Prochlorococcaceae</taxon>
        <taxon>Prochlorococcus</taxon>
    </lineage>
</organism>
<feature type="chain" id="PRO_0000239792" description="Bifunctional pantoate ligase/cytidylate kinase">
    <location>
        <begin position="1"/>
        <end position="510"/>
    </location>
</feature>
<feature type="region of interest" description="Pantoate--beta-alanine ligase" evidence="1">
    <location>
        <begin position="1"/>
        <end position="276"/>
    </location>
</feature>
<feature type="region of interest" description="Cytidylate kinase" evidence="1">
    <location>
        <begin position="277"/>
        <end position="510"/>
    </location>
</feature>
<feature type="active site" description="Proton donor" evidence="1">
    <location>
        <position position="36"/>
    </location>
</feature>
<feature type="binding site" evidence="1">
    <location>
        <begin position="29"/>
        <end position="36"/>
    </location>
    <ligand>
        <name>ATP</name>
        <dbReference type="ChEBI" id="CHEBI:30616"/>
    </ligand>
</feature>
<feature type="binding site" evidence="1">
    <location>
        <position position="61"/>
    </location>
    <ligand>
        <name>(R)-pantoate</name>
        <dbReference type="ChEBI" id="CHEBI:15980"/>
    </ligand>
</feature>
<feature type="binding site" evidence="1">
    <location>
        <position position="61"/>
    </location>
    <ligand>
        <name>beta-alanine</name>
        <dbReference type="ChEBI" id="CHEBI:57966"/>
    </ligand>
</feature>
<feature type="binding site" evidence="1">
    <location>
        <begin position="150"/>
        <end position="153"/>
    </location>
    <ligand>
        <name>ATP</name>
        <dbReference type="ChEBI" id="CHEBI:30616"/>
    </ligand>
</feature>
<feature type="binding site" evidence="1">
    <location>
        <position position="156"/>
    </location>
    <ligand>
        <name>(R)-pantoate</name>
        <dbReference type="ChEBI" id="CHEBI:15980"/>
    </ligand>
</feature>
<feature type="binding site" evidence="1">
    <location>
        <begin position="187"/>
        <end position="190"/>
    </location>
    <ligand>
        <name>ATP</name>
        <dbReference type="ChEBI" id="CHEBI:30616"/>
    </ligand>
</feature>
<protein>
    <recommendedName>
        <fullName evidence="1">Bifunctional pantoate ligase/cytidylate kinase</fullName>
    </recommendedName>
    <domain>
        <recommendedName>
            <fullName evidence="1">Pantothenate synthetase</fullName>
            <shortName evidence="1">PS</shortName>
            <ecNumber evidence="1">6.3.2.1</ecNumber>
        </recommendedName>
        <alternativeName>
            <fullName evidence="1">Pantoate--beta-alanine ligase</fullName>
        </alternativeName>
        <alternativeName>
            <fullName evidence="1">Pantoate-activating enzyme</fullName>
        </alternativeName>
    </domain>
    <domain>
        <recommendedName>
            <fullName evidence="1">Cytidylate kinase</fullName>
            <shortName evidence="1">CK</shortName>
            <ecNumber evidence="1">2.7.4.25</ecNumber>
        </recommendedName>
        <alternativeName>
            <fullName evidence="1">Cytidine monophosphate kinase</fullName>
            <shortName evidence="1">CMP kinase</shortName>
        </alternativeName>
    </domain>
</protein>
<proteinExistence type="inferred from homology"/>
<comment type="function">
    <text evidence="1">Catalyzes the condensation of pantoate with beta-alanine in an ATP-dependent reaction via a pantoyl-adenylate intermediate.</text>
</comment>
<comment type="function">
    <text evidence="1">Catalyzes the transfer of a phosphate group from ATP to either CMP or dCMP to form CDP or dCDP and ADP, respectively.</text>
</comment>
<comment type="catalytic activity">
    <reaction evidence="1">
        <text>(R)-pantoate + beta-alanine + ATP = (R)-pantothenate + AMP + diphosphate + H(+)</text>
        <dbReference type="Rhea" id="RHEA:10912"/>
        <dbReference type="ChEBI" id="CHEBI:15378"/>
        <dbReference type="ChEBI" id="CHEBI:15980"/>
        <dbReference type="ChEBI" id="CHEBI:29032"/>
        <dbReference type="ChEBI" id="CHEBI:30616"/>
        <dbReference type="ChEBI" id="CHEBI:33019"/>
        <dbReference type="ChEBI" id="CHEBI:57966"/>
        <dbReference type="ChEBI" id="CHEBI:456215"/>
        <dbReference type="EC" id="6.3.2.1"/>
    </reaction>
</comment>
<comment type="catalytic activity">
    <reaction evidence="1">
        <text>CMP + ATP = CDP + ADP</text>
        <dbReference type="Rhea" id="RHEA:11600"/>
        <dbReference type="ChEBI" id="CHEBI:30616"/>
        <dbReference type="ChEBI" id="CHEBI:58069"/>
        <dbReference type="ChEBI" id="CHEBI:60377"/>
        <dbReference type="ChEBI" id="CHEBI:456216"/>
        <dbReference type="EC" id="2.7.4.25"/>
    </reaction>
</comment>
<comment type="catalytic activity">
    <reaction evidence="1">
        <text>dCMP + ATP = dCDP + ADP</text>
        <dbReference type="Rhea" id="RHEA:25094"/>
        <dbReference type="ChEBI" id="CHEBI:30616"/>
        <dbReference type="ChEBI" id="CHEBI:57566"/>
        <dbReference type="ChEBI" id="CHEBI:58593"/>
        <dbReference type="ChEBI" id="CHEBI:456216"/>
        <dbReference type="EC" id="2.7.4.25"/>
    </reaction>
</comment>
<comment type="pathway">
    <text evidence="1">Cofactor biosynthesis; (R)-pantothenate biosynthesis; (R)-pantothenate from (R)-pantoate and beta-alanine: step 1/1.</text>
</comment>
<comment type="subcellular location">
    <subcellularLocation>
        <location evidence="1">Cytoplasm</location>
    </subcellularLocation>
</comment>
<comment type="similarity">
    <text evidence="1">In the N-terminal section; belongs to the pantothenate synthetase family.</text>
</comment>
<comment type="similarity">
    <text evidence="1">In the C-terminal section; belongs to the cytidylate kinase family. Type 1 subfamily.</text>
</comment>
<reference key="1">
    <citation type="journal article" date="2003" name="Nature">
        <title>Genome divergence in two Prochlorococcus ecotypes reflects oceanic niche differentiation.</title>
        <authorList>
            <person name="Rocap G."/>
            <person name="Larimer F.W."/>
            <person name="Lamerdin J.E."/>
            <person name="Malfatti S."/>
            <person name="Chain P."/>
            <person name="Ahlgren N.A."/>
            <person name="Arellano A."/>
            <person name="Coleman M."/>
            <person name="Hauser L."/>
            <person name="Hess W.R."/>
            <person name="Johnson Z.I."/>
            <person name="Land M.L."/>
            <person name="Lindell D."/>
            <person name="Post A.F."/>
            <person name="Regala W."/>
            <person name="Shah M."/>
            <person name="Shaw S.L."/>
            <person name="Steglich C."/>
            <person name="Sullivan M.B."/>
            <person name="Ting C.S."/>
            <person name="Tolonen A."/>
            <person name="Webb E.A."/>
            <person name="Zinser E.R."/>
            <person name="Chisholm S.W."/>
        </authorList>
    </citation>
    <scope>NUCLEOTIDE SEQUENCE [LARGE SCALE GENOMIC DNA]</scope>
    <source>
        <strain>CCMP1986 / NIES-2087 / MED4</strain>
    </source>
</reference>
<gene>
    <name evidence="1" type="primary">panC/cmk</name>
    <name type="ordered locus">PMM1590</name>
</gene>
<evidence type="ECO:0000255" key="1">
    <source>
        <dbReference type="HAMAP-Rule" id="MF_01349"/>
    </source>
</evidence>
<accession>Q7UZR6</accession>
<sequence length="510" mass="58295">MNKIIIRKTEDLKEWRRNLKCDINFIPTMGNLHDGHQKLISTAQSSNCNTNLLSIFVNPLQFDSKEDLKSYPKTVDKDIEIAFSNGADAIFIPNVTDIYPKKNKSISYLKASKELSSALCGLTRVGHFDGVCTVVYRLLKLIQPKNLFLGEKDWQQLLIIKNLIEEKKFNIKIIPVPTQRDSDGVPFSSRNKHLSKSERKSLKLFSNELENAKIIFKKDKRIDLKQLTNKLKSKNISIEYLEHLHPYSLKKVQSNDNISILAGAIKCGKTRLIDHVFLMKRKPIIAIDGPAGSGKSTITKLIAKELNLLYLDTGAMYRAISWLFKKEKIDYAKESELKKILNNISIIFKSNSISQQDVFINNFCVTEEIRSQEISSIVSKISSIKKVREFLVYEQRKIGQSGGLVAEGRDIGTTVFPNAELKIFLTASIDERAKRRKSELDLRGTEEIDFNQLRELIRKRDFEDSTRKISPLKKANDAIELLTDGYSINEVVEKIVNIYNLNIPKEIQLE</sequence>
<dbReference type="EC" id="6.3.2.1" evidence="1"/>
<dbReference type="EC" id="2.7.4.25" evidence="1"/>
<dbReference type="EMBL" id="BX548174">
    <property type="protein sequence ID" value="CAE20049.1"/>
    <property type="molecule type" value="Genomic_DNA"/>
</dbReference>
<dbReference type="RefSeq" id="WP_011133218.1">
    <property type="nucleotide sequence ID" value="NC_005072.1"/>
</dbReference>
<dbReference type="SMR" id="Q7UZR6"/>
<dbReference type="STRING" id="59919.PMM1590"/>
<dbReference type="KEGG" id="pmm:PMM1590"/>
<dbReference type="eggNOG" id="COG0283">
    <property type="taxonomic scope" value="Bacteria"/>
</dbReference>
<dbReference type="eggNOG" id="COG0414">
    <property type="taxonomic scope" value="Bacteria"/>
</dbReference>
<dbReference type="HOGENOM" id="CLU_037427_0_0_3"/>
<dbReference type="OrthoDB" id="9773087at2"/>
<dbReference type="UniPathway" id="UPA00028">
    <property type="reaction ID" value="UER00005"/>
</dbReference>
<dbReference type="Proteomes" id="UP000001026">
    <property type="component" value="Chromosome"/>
</dbReference>
<dbReference type="GO" id="GO:0005829">
    <property type="term" value="C:cytosol"/>
    <property type="evidence" value="ECO:0007669"/>
    <property type="project" value="TreeGrafter"/>
</dbReference>
<dbReference type="GO" id="GO:0005524">
    <property type="term" value="F:ATP binding"/>
    <property type="evidence" value="ECO:0007669"/>
    <property type="project" value="UniProtKB-UniRule"/>
</dbReference>
<dbReference type="GO" id="GO:0036430">
    <property type="term" value="F:CMP kinase activity"/>
    <property type="evidence" value="ECO:0007669"/>
    <property type="project" value="RHEA"/>
</dbReference>
<dbReference type="GO" id="GO:0036431">
    <property type="term" value="F:dCMP kinase activity"/>
    <property type="evidence" value="ECO:0007669"/>
    <property type="project" value="RHEA"/>
</dbReference>
<dbReference type="GO" id="GO:0004592">
    <property type="term" value="F:pantoate-beta-alanine ligase activity"/>
    <property type="evidence" value="ECO:0007669"/>
    <property type="project" value="UniProtKB-UniRule"/>
</dbReference>
<dbReference type="GO" id="GO:0015949">
    <property type="term" value="P:nucleobase-containing small molecule interconversion"/>
    <property type="evidence" value="ECO:0007669"/>
    <property type="project" value="TreeGrafter"/>
</dbReference>
<dbReference type="GO" id="GO:0015940">
    <property type="term" value="P:pantothenate biosynthetic process"/>
    <property type="evidence" value="ECO:0007669"/>
    <property type="project" value="UniProtKB-UniRule"/>
</dbReference>
<dbReference type="GO" id="GO:0006220">
    <property type="term" value="P:pyrimidine nucleotide metabolic process"/>
    <property type="evidence" value="ECO:0007669"/>
    <property type="project" value="UniProtKB-UniRule"/>
</dbReference>
<dbReference type="CDD" id="cd02020">
    <property type="entry name" value="CMPK"/>
    <property type="match status" value="1"/>
</dbReference>
<dbReference type="CDD" id="cd00560">
    <property type="entry name" value="PanC"/>
    <property type="match status" value="1"/>
</dbReference>
<dbReference type="Gene3D" id="3.40.50.620">
    <property type="entry name" value="HUPs"/>
    <property type="match status" value="1"/>
</dbReference>
<dbReference type="Gene3D" id="3.40.50.300">
    <property type="entry name" value="P-loop containing nucleotide triphosphate hydrolases"/>
    <property type="match status" value="1"/>
</dbReference>
<dbReference type="Gene3D" id="3.30.1300.10">
    <property type="entry name" value="Pantoate-beta-alanine ligase, C-terminal domain"/>
    <property type="match status" value="1"/>
</dbReference>
<dbReference type="HAMAP" id="MF_00238">
    <property type="entry name" value="Cytidyl_kinase_type1"/>
    <property type="match status" value="1"/>
</dbReference>
<dbReference type="HAMAP" id="MF_00158">
    <property type="entry name" value="PanC"/>
    <property type="match status" value="1"/>
</dbReference>
<dbReference type="HAMAP" id="MF_01349">
    <property type="entry name" value="PanCY"/>
    <property type="match status" value="1"/>
</dbReference>
<dbReference type="InterPro" id="IPR003136">
    <property type="entry name" value="Cytidylate_kin"/>
</dbReference>
<dbReference type="InterPro" id="IPR011994">
    <property type="entry name" value="Cytidylate_kinase_dom"/>
</dbReference>
<dbReference type="InterPro" id="IPR027417">
    <property type="entry name" value="P-loop_NTPase"/>
</dbReference>
<dbReference type="InterPro" id="IPR003721">
    <property type="entry name" value="Pantoate_ligase"/>
</dbReference>
<dbReference type="InterPro" id="IPR024894">
    <property type="entry name" value="Pantoate_ligase/cytidylate_kin"/>
</dbReference>
<dbReference type="InterPro" id="IPR042176">
    <property type="entry name" value="Pantoate_ligase_C"/>
</dbReference>
<dbReference type="InterPro" id="IPR014729">
    <property type="entry name" value="Rossmann-like_a/b/a_fold"/>
</dbReference>
<dbReference type="NCBIfam" id="TIGR00017">
    <property type="entry name" value="cmk"/>
    <property type="match status" value="1"/>
</dbReference>
<dbReference type="NCBIfam" id="TIGR00018">
    <property type="entry name" value="panC"/>
    <property type="match status" value="1"/>
</dbReference>
<dbReference type="NCBIfam" id="NF010004">
    <property type="entry name" value="PRK13477.1"/>
    <property type="match status" value="1"/>
</dbReference>
<dbReference type="PANTHER" id="PTHR21299:SF2">
    <property type="entry name" value="CYTIDYLATE KINASE"/>
    <property type="match status" value="1"/>
</dbReference>
<dbReference type="PANTHER" id="PTHR21299">
    <property type="entry name" value="CYTIDYLATE KINASE/PANTOATE-BETA-ALANINE LIGASE"/>
    <property type="match status" value="1"/>
</dbReference>
<dbReference type="Pfam" id="PF02224">
    <property type="entry name" value="Cytidylate_kin"/>
    <property type="match status" value="1"/>
</dbReference>
<dbReference type="Pfam" id="PF02569">
    <property type="entry name" value="Pantoate_ligase"/>
    <property type="match status" value="1"/>
</dbReference>
<dbReference type="SUPFAM" id="SSF52374">
    <property type="entry name" value="Nucleotidylyl transferase"/>
    <property type="match status" value="1"/>
</dbReference>
<dbReference type="SUPFAM" id="SSF52540">
    <property type="entry name" value="P-loop containing nucleoside triphosphate hydrolases"/>
    <property type="match status" value="1"/>
</dbReference>
<keyword id="KW-0067">ATP-binding</keyword>
<keyword id="KW-0963">Cytoplasm</keyword>
<keyword id="KW-0418">Kinase</keyword>
<keyword id="KW-0436">Ligase</keyword>
<keyword id="KW-0511">Multifunctional enzyme</keyword>
<keyword id="KW-0547">Nucleotide-binding</keyword>
<keyword id="KW-0566">Pantothenate biosynthesis</keyword>
<keyword id="KW-0808">Transferase</keyword>